<feature type="chain" id="PRO_0000231921" description="RNA pyrophosphohydrolase">
    <location>
        <begin position="1"/>
        <end position="158"/>
    </location>
</feature>
<feature type="domain" description="Nudix hydrolase" evidence="1">
    <location>
        <begin position="9"/>
        <end position="151"/>
    </location>
</feature>
<feature type="short sequence motif" description="Nudix box">
    <location>
        <begin position="43"/>
        <end position="64"/>
    </location>
</feature>
<evidence type="ECO:0000255" key="1">
    <source>
        <dbReference type="HAMAP-Rule" id="MF_00298"/>
    </source>
</evidence>
<comment type="function">
    <text evidence="1">Accelerates the degradation of transcripts by removing pyrophosphate from the 5'-end of triphosphorylated RNA, leading to a more labile monophosphorylated state that can stimulate subsequent ribonuclease cleavage.</text>
</comment>
<comment type="cofactor">
    <cofactor evidence="1">
        <name>a divalent metal cation</name>
        <dbReference type="ChEBI" id="CHEBI:60240"/>
    </cofactor>
</comment>
<comment type="similarity">
    <text evidence="1">Belongs to the Nudix hydrolase family. RppH subfamily.</text>
</comment>
<keyword id="KW-0378">Hydrolase</keyword>
<keyword id="KW-1185">Reference proteome</keyword>
<sequence>MSDNKVNLPLRNGVGIVVLNKDNKVFVAKRIDNQKNFWQMPQGGVDKGEDYLTAAYRELEEETSIKNVELIKECDGLISYELPKNLLGIIWKGKYRGQEQKWFIMRFLGQDNEIDIKTKHPEFSEWKWIDLENITDLVVDFKLHVYKDVKEKVKEILN</sequence>
<name>RPPH_PELUB</name>
<proteinExistence type="inferred from homology"/>
<reference key="1">
    <citation type="journal article" date="2005" name="Science">
        <title>Genome streamlining in a cosmopolitan oceanic bacterium.</title>
        <authorList>
            <person name="Giovannoni S.J."/>
            <person name="Tripp H.J."/>
            <person name="Givan S."/>
            <person name="Podar M."/>
            <person name="Vergin K.L."/>
            <person name="Baptista D."/>
            <person name="Bibbs L."/>
            <person name="Eads J."/>
            <person name="Richardson T.H."/>
            <person name="Noordewier M."/>
            <person name="Rappe M.S."/>
            <person name="Short J.M."/>
            <person name="Carrington J.C."/>
            <person name="Mathur E.J."/>
        </authorList>
    </citation>
    <scope>NUCLEOTIDE SEQUENCE [LARGE SCALE GENOMIC DNA]</scope>
    <source>
        <strain>HTCC1062</strain>
    </source>
</reference>
<dbReference type="EC" id="3.6.1.-" evidence="1"/>
<dbReference type="EMBL" id="CP000084">
    <property type="protein sequence ID" value="AAZ21049.1"/>
    <property type="molecule type" value="Genomic_DNA"/>
</dbReference>
<dbReference type="RefSeq" id="WP_006997682.1">
    <property type="nucleotide sequence ID" value="NC_007205.1"/>
</dbReference>
<dbReference type="SMR" id="Q4FP40"/>
<dbReference type="STRING" id="335992.SAR11_0228"/>
<dbReference type="GeneID" id="66294725"/>
<dbReference type="KEGG" id="pub:SAR11_0228"/>
<dbReference type="eggNOG" id="COG1051">
    <property type="taxonomic scope" value="Bacteria"/>
</dbReference>
<dbReference type="HOGENOM" id="CLU_087195_3_0_5"/>
<dbReference type="OrthoDB" id="9816040at2"/>
<dbReference type="Proteomes" id="UP000002528">
    <property type="component" value="Chromosome"/>
</dbReference>
<dbReference type="GO" id="GO:0034432">
    <property type="term" value="F:bis(5'-adenosyl)-pentaphosphatase activity"/>
    <property type="evidence" value="ECO:0007669"/>
    <property type="project" value="TreeGrafter"/>
</dbReference>
<dbReference type="GO" id="GO:0008893">
    <property type="term" value="F:guanosine-3',5'-bis(diphosphate) 3'-diphosphatase activity"/>
    <property type="evidence" value="ECO:0007669"/>
    <property type="project" value="TreeGrafter"/>
</dbReference>
<dbReference type="GO" id="GO:0006753">
    <property type="term" value="P:nucleoside phosphate metabolic process"/>
    <property type="evidence" value="ECO:0007669"/>
    <property type="project" value="TreeGrafter"/>
</dbReference>
<dbReference type="GO" id="GO:0019693">
    <property type="term" value="P:ribose phosphate metabolic process"/>
    <property type="evidence" value="ECO:0007669"/>
    <property type="project" value="TreeGrafter"/>
</dbReference>
<dbReference type="CDD" id="cd03671">
    <property type="entry name" value="NUDIX_Ap4A_hydrolase_plant_like"/>
    <property type="match status" value="1"/>
</dbReference>
<dbReference type="Gene3D" id="3.90.79.10">
    <property type="entry name" value="Nucleoside Triphosphate Pyrophosphohydrolase"/>
    <property type="match status" value="1"/>
</dbReference>
<dbReference type="HAMAP" id="MF_00298">
    <property type="entry name" value="Nudix_RppH"/>
    <property type="match status" value="1"/>
</dbReference>
<dbReference type="InterPro" id="IPR015797">
    <property type="entry name" value="NUDIX_hydrolase-like_dom_sf"/>
</dbReference>
<dbReference type="InterPro" id="IPR000086">
    <property type="entry name" value="NUDIX_hydrolase_dom"/>
</dbReference>
<dbReference type="InterPro" id="IPR022927">
    <property type="entry name" value="RppH"/>
</dbReference>
<dbReference type="NCBIfam" id="NF001936">
    <property type="entry name" value="PRK00714.1-3"/>
    <property type="match status" value="1"/>
</dbReference>
<dbReference type="NCBIfam" id="NF001938">
    <property type="entry name" value="PRK00714.1-5"/>
    <property type="match status" value="1"/>
</dbReference>
<dbReference type="PANTHER" id="PTHR11839:SF22">
    <property type="entry name" value="NUDIX HYDROLASE 26, CHLOROPLASTIC"/>
    <property type="match status" value="1"/>
</dbReference>
<dbReference type="PANTHER" id="PTHR11839">
    <property type="entry name" value="UDP/ADP-SUGAR PYROPHOSPHATASE"/>
    <property type="match status" value="1"/>
</dbReference>
<dbReference type="Pfam" id="PF00293">
    <property type="entry name" value="NUDIX"/>
    <property type="match status" value="1"/>
</dbReference>
<dbReference type="SUPFAM" id="SSF55811">
    <property type="entry name" value="Nudix"/>
    <property type="match status" value="1"/>
</dbReference>
<dbReference type="PROSITE" id="PS51462">
    <property type="entry name" value="NUDIX"/>
    <property type="match status" value="1"/>
</dbReference>
<organism>
    <name type="scientific">Pelagibacter ubique (strain HTCC1062)</name>
    <dbReference type="NCBI Taxonomy" id="335992"/>
    <lineage>
        <taxon>Bacteria</taxon>
        <taxon>Pseudomonadati</taxon>
        <taxon>Pseudomonadota</taxon>
        <taxon>Alphaproteobacteria</taxon>
        <taxon>Candidatus Pelagibacterales</taxon>
        <taxon>Candidatus Pelagibacteraceae</taxon>
        <taxon>Candidatus Pelagibacter</taxon>
    </lineage>
</organism>
<accession>Q4FP40</accession>
<gene>
    <name evidence="1" type="primary">rppH</name>
    <name evidence="1" type="synonym">nudH</name>
    <name type="ordered locus">SAR11_0228</name>
</gene>
<protein>
    <recommendedName>
        <fullName evidence="1">RNA pyrophosphohydrolase</fullName>
        <ecNumber evidence="1">3.6.1.-</ecNumber>
    </recommendedName>
    <alternativeName>
        <fullName evidence="1">(Di)nucleoside polyphosphate hydrolase</fullName>
    </alternativeName>
</protein>